<organism>
    <name type="scientific">Opitutus terrae (strain DSM 11246 / JCM 15787 / PB90-1)</name>
    <dbReference type="NCBI Taxonomy" id="452637"/>
    <lineage>
        <taxon>Bacteria</taxon>
        <taxon>Pseudomonadati</taxon>
        <taxon>Verrucomicrobiota</taxon>
        <taxon>Opitutia</taxon>
        <taxon>Opitutales</taxon>
        <taxon>Opitutaceae</taxon>
        <taxon>Opitutus</taxon>
    </lineage>
</organism>
<evidence type="ECO:0000255" key="1">
    <source>
        <dbReference type="HAMAP-Rule" id="MF_00300"/>
    </source>
</evidence>
<gene>
    <name evidence="1" type="primary">aroC</name>
    <name type="ordered locus">Oter_1623</name>
</gene>
<feature type="chain" id="PRO_1000115378" description="Chorismate synthase">
    <location>
        <begin position="1"/>
        <end position="363"/>
    </location>
</feature>
<feature type="binding site" evidence="1">
    <location>
        <position position="47"/>
    </location>
    <ligand>
        <name>NADP(+)</name>
        <dbReference type="ChEBI" id="CHEBI:58349"/>
    </ligand>
</feature>
<feature type="binding site" evidence="1">
    <location>
        <begin position="124"/>
        <end position="126"/>
    </location>
    <ligand>
        <name>FMN</name>
        <dbReference type="ChEBI" id="CHEBI:58210"/>
    </ligand>
</feature>
<feature type="binding site" evidence="1">
    <location>
        <position position="285"/>
    </location>
    <ligand>
        <name>FMN</name>
        <dbReference type="ChEBI" id="CHEBI:58210"/>
    </ligand>
</feature>
<feature type="binding site" evidence="1">
    <location>
        <begin position="300"/>
        <end position="304"/>
    </location>
    <ligand>
        <name>FMN</name>
        <dbReference type="ChEBI" id="CHEBI:58210"/>
    </ligand>
</feature>
<feature type="binding site" evidence="1">
    <location>
        <position position="326"/>
    </location>
    <ligand>
        <name>FMN</name>
        <dbReference type="ChEBI" id="CHEBI:58210"/>
    </ligand>
</feature>
<protein>
    <recommendedName>
        <fullName evidence="1">Chorismate synthase</fullName>
        <shortName evidence="1">CS</shortName>
        <ecNumber evidence="1">4.2.3.5</ecNumber>
    </recommendedName>
    <alternativeName>
        <fullName evidence="1">5-enolpyruvylshikimate-3-phosphate phospholyase</fullName>
    </alternativeName>
</protein>
<accession>B1ZUM3</accession>
<reference key="1">
    <citation type="journal article" date="2011" name="J. Bacteriol.">
        <title>Genome sequence of the verrucomicrobium Opitutus terrae PB90-1, an abundant inhabitant of rice paddy soil ecosystems.</title>
        <authorList>
            <person name="van Passel M.W."/>
            <person name="Kant R."/>
            <person name="Palva A."/>
            <person name="Copeland A."/>
            <person name="Lucas S."/>
            <person name="Lapidus A."/>
            <person name="Glavina del Rio T."/>
            <person name="Pitluck S."/>
            <person name="Goltsman E."/>
            <person name="Clum A."/>
            <person name="Sun H."/>
            <person name="Schmutz J."/>
            <person name="Larimer F.W."/>
            <person name="Land M.L."/>
            <person name="Hauser L."/>
            <person name="Kyrpides N."/>
            <person name="Mikhailova N."/>
            <person name="Richardson P.P."/>
            <person name="Janssen P.H."/>
            <person name="de Vos W.M."/>
            <person name="Smidt H."/>
        </authorList>
    </citation>
    <scope>NUCLEOTIDE SEQUENCE [LARGE SCALE GENOMIC DNA]</scope>
    <source>
        <strain>DSM 11246 / JCM 15787 / PB90-1</strain>
    </source>
</reference>
<dbReference type="EC" id="4.2.3.5" evidence="1"/>
<dbReference type="EMBL" id="CP001032">
    <property type="protein sequence ID" value="ACB74907.1"/>
    <property type="molecule type" value="Genomic_DNA"/>
</dbReference>
<dbReference type="RefSeq" id="WP_012374444.1">
    <property type="nucleotide sequence ID" value="NC_010571.1"/>
</dbReference>
<dbReference type="SMR" id="B1ZUM3"/>
<dbReference type="STRING" id="452637.Oter_1623"/>
<dbReference type="KEGG" id="ote:Oter_1623"/>
<dbReference type="eggNOG" id="COG0082">
    <property type="taxonomic scope" value="Bacteria"/>
</dbReference>
<dbReference type="HOGENOM" id="CLU_034547_0_2_0"/>
<dbReference type="OrthoDB" id="9771806at2"/>
<dbReference type="UniPathway" id="UPA00053">
    <property type="reaction ID" value="UER00090"/>
</dbReference>
<dbReference type="Proteomes" id="UP000007013">
    <property type="component" value="Chromosome"/>
</dbReference>
<dbReference type="GO" id="GO:0005829">
    <property type="term" value="C:cytosol"/>
    <property type="evidence" value="ECO:0007669"/>
    <property type="project" value="TreeGrafter"/>
</dbReference>
<dbReference type="GO" id="GO:0004107">
    <property type="term" value="F:chorismate synthase activity"/>
    <property type="evidence" value="ECO:0007669"/>
    <property type="project" value="UniProtKB-UniRule"/>
</dbReference>
<dbReference type="GO" id="GO:0010181">
    <property type="term" value="F:FMN binding"/>
    <property type="evidence" value="ECO:0007669"/>
    <property type="project" value="TreeGrafter"/>
</dbReference>
<dbReference type="GO" id="GO:0008652">
    <property type="term" value="P:amino acid biosynthetic process"/>
    <property type="evidence" value="ECO:0007669"/>
    <property type="project" value="UniProtKB-KW"/>
</dbReference>
<dbReference type="GO" id="GO:0009073">
    <property type="term" value="P:aromatic amino acid family biosynthetic process"/>
    <property type="evidence" value="ECO:0007669"/>
    <property type="project" value="UniProtKB-KW"/>
</dbReference>
<dbReference type="GO" id="GO:0009423">
    <property type="term" value="P:chorismate biosynthetic process"/>
    <property type="evidence" value="ECO:0007669"/>
    <property type="project" value="UniProtKB-UniRule"/>
</dbReference>
<dbReference type="CDD" id="cd07304">
    <property type="entry name" value="Chorismate_synthase"/>
    <property type="match status" value="1"/>
</dbReference>
<dbReference type="FunFam" id="3.60.150.10:FF:000003">
    <property type="entry name" value="Chorismate synthase"/>
    <property type="match status" value="1"/>
</dbReference>
<dbReference type="Gene3D" id="3.60.150.10">
    <property type="entry name" value="Chorismate synthase AroC"/>
    <property type="match status" value="1"/>
</dbReference>
<dbReference type="HAMAP" id="MF_00300">
    <property type="entry name" value="Chorismate_synth"/>
    <property type="match status" value="1"/>
</dbReference>
<dbReference type="InterPro" id="IPR000453">
    <property type="entry name" value="Chorismate_synth"/>
</dbReference>
<dbReference type="InterPro" id="IPR035904">
    <property type="entry name" value="Chorismate_synth_AroC_sf"/>
</dbReference>
<dbReference type="InterPro" id="IPR020541">
    <property type="entry name" value="Chorismate_synthase_CS"/>
</dbReference>
<dbReference type="NCBIfam" id="TIGR00033">
    <property type="entry name" value="aroC"/>
    <property type="match status" value="1"/>
</dbReference>
<dbReference type="NCBIfam" id="NF003793">
    <property type="entry name" value="PRK05382.1"/>
    <property type="match status" value="1"/>
</dbReference>
<dbReference type="PANTHER" id="PTHR21085">
    <property type="entry name" value="CHORISMATE SYNTHASE"/>
    <property type="match status" value="1"/>
</dbReference>
<dbReference type="PANTHER" id="PTHR21085:SF0">
    <property type="entry name" value="CHORISMATE SYNTHASE"/>
    <property type="match status" value="1"/>
</dbReference>
<dbReference type="Pfam" id="PF01264">
    <property type="entry name" value="Chorismate_synt"/>
    <property type="match status" value="1"/>
</dbReference>
<dbReference type="PIRSF" id="PIRSF001456">
    <property type="entry name" value="Chorismate_synth"/>
    <property type="match status" value="1"/>
</dbReference>
<dbReference type="SUPFAM" id="SSF103263">
    <property type="entry name" value="Chorismate synthase, AroC"/>
    <property type="match status" value="1"/>
</dbReference>
<dbReference type="PROSITE" id="PS00787">
    <property type="entry name" value="CHORISMATE_SYNTHASE_1"/>
    <property type="match status" value="1"/>
</dbReference>
<dbReference type="PROSITE" id="PS00788">
    <property type="entry name" value="CHORISMATE_SYNTHASE_2"/>
    <property type="match status" value="1"/>
</dbReference>
<dbReference type="PROSITE" id="PS00789">
    <property type="entry name" value="CHORISMATE_SYNTHASE_3"/>
    <property type="match status" value="1"/>
</dbReference>
<comment type="function">
    <text evidence="1">Catalyzes the anti-1,4-elimination of the C-3 phosphate and the C-6 proR hydrogen from 5-enolpyruvylshikimate-3-phosphate (EPSP) to yield chorismate, which is the branch point compound that serves as the starting substrate for the three terminal pathways of aromatic amino acid biosynthesis. This reaction introduces a second double bond into the aromatic ring system.</text>
</comment>
<comment type="catalytic activity">
    <reaction evidence="1">
        <text>5-O-(1-carboxyvinyl)-3-phosphoshikimate = chorismate + phosphate</text>
        <dbReference type="Rhea" id="RHEA:21020"/>
        <dbReference type="ChEBI" id="CHEBI:29748"/>
        <dbReference type="ChEBI" id="CHEBI:43474"/>
        <dbReference type="ChEBI" id="CHEBI:57701"/>
        <dbReference type="EC" id="4.2.3.5"/>
    </reaction>
</comment>
<comment type="cofactor">
    <cofactor evidence="1">
        <name>FMNH2</name>
        <dbReference type="ChEBI" id="CHEBI:57618"/>
    </cofactor>
    <text evidence="1">Reduced FMN (FMNH(2)).</text>
</comment>
<comment type="pathway">
    <text evidence="1">Metabolic intermediate biosynthesis; chorismate biosynthesis; chorismate from D-erythrose 4-phosphate and phosphoenolpyruvate: step 7/7.</text>
</comment>
<comment type="subunit">
    <text evidence="1">Homotetramer.</text>
</comment>
<comment type="similarity">
    <text evidence="1">Belongs to the chorismate synthase family.</text>
</comment>
<sequence length="363" mass="39109">MPNSFGKLFTVTTWGESHGASVGVVVDGCPPNLPLSVEEIQTELDRRRPGQSDIVTPRKEEDRVEILSGLFEGKTTGTPLTMMVRNADQRPEAYAEMREKFRPSHADYTYQAKFGIRDHRGGGRSSARETIGRVAAGAIAQKILRLAGGIEIRAFVTQIQDICVPALTAFPSREEVEATPIRCPHAATAAAMIERIKAVRSQGDSVGGVIECRVRGVPAGLGEPVFDRLEADLGKAMLSLPATKGFEIGSGFAGTRLKGSEHNDPFVMRDGRVTTTTNHSGGVQGGISNGAEIVFRVAFKPTATILQPQQTVDVHGADTELAARGRHDPCVLPRAVPIVEAMTALVLVDHWMRQSAQCGTFKF</sequence>
<name>AROC_OPITP</name>
<keyword id="KW-0028">Amino-acid biosynthesis</keyword>
<keyword id="KW-0057">Aromatic amino acid biosynthesis</keyword>
<keyword id="KW-0274">FAD</keyword>
<keyword id="KW-0285">Flavoprotein</keyword>
<keyword id="KW-0288">FMN</keyword>
<keyword id="KW-0456">Lyase</keyword>
<keyword id="KW-0521">NADP</keyword>
<keyword id="KW-1185">Reference proteome</keyword>
<proteinExistence type="inferred from homology"/>